<name>AES_ECO57</name>
<keyword id="KW-0963">Cytoplasm</keyword>
<keyword id="KW-0378">Hydrolase</keyword>
<keyword id="KW-1185">Reference proteome</keyword>
<keyword id="KW-0719">Serine esterase</keyword>
<sequence>MKPENKLPVLDLISAEMKTVVNTLQPDLPPWPATGTIAEQRQYYTLERRFWNAGAPEMATKAYMVPTKYGQVETRLFCPQPDSPATLFYLHGGGFILGNLDTHDRIMRLLASYSQCTVIGIDYTLSPEARFPQVIEEIVAACCYFHQQAEDYQINMSRIGFAGDSAGAMLALASALWLRDKQIDCGKVAGVLLWYGLYGLRDSVTRRLLGGVWDGLTQQDLQMYEEAYLSNDADRESPYYCLFNNDLTREVPPCFIAGAEFDPLLDDSRLLYQTLAAHQQPCEFKLYPGTLHAFLHYSRMMKTADEALRDGAQFFTAQL</sequence>
<reference key="1">
    <citation type="journal article" date="2001" name="Nature">
        <title>Genome sequence of enterohaemorrhagic Escherichia coli O157:H7.</title>
        <authorList>
            <person name="Perna N.T."/>
            <person name="Plunkett G. III"/>
            <person name="Burland V."/>
            <person name="Mau B."/>
            <person name="Glasner J.D."/>
            <person name="Rose D.J."/>
            <person name="Mayhew G.F."/>
            <person name="Evans P.S."/>
            <person name="Gregor J."/>
            <person name="Kirkpatrick H.A."/>
            <person name="Posfai G."/>
            <person name="Hackett J."/>
            <person name="Klink S."/>
            <person name="Boutin A."/>
            <person name="Shao Y."/>
            <person name="Miller L."/>
            <person name="Grotbeck E.J."/>
            <person name="Davis N.W."/>
            <person name="Lim A."/>
            <person name="Dimalanta E.T."/>
            <person name="Potamousis K."/>
            <person name="Apodaca J."/>
            <person name="Anantharaman T.S."/>
            <person name="Lin J."/>
            <person name="Yen G."/>
            <person name="Schwartz D.C."/>
            <person name="Welch R.A."/>
            <person name="Blattner F.R."/>
        </authorList>
    </citation>
    <scope>NUCLEOTIDE SEQUENCE [LARGE SCALE GENOMIC DNA]</scope>
    <source>
        <strain>O157:H7 / EDL933 / ATCC 700927 / EHEC</strain>
    </source>
</reference>
<reference key="2">
    <citation type="journal article" date="2001" name="DNA Res.">
        <title>Complete genome sequence of enterohemorrhagic Escherichia coli O157:H7 and genomic comparison with a laboratory strain K-12.</title>
        <authorList>
            <person name="Hayashi T."/>
            <person name="Makino K."/>
            <person name="Ohnishi M."/>
            <person name="Kurokawa K."/>
            <person name="Ishii K."/>
            <person name="Yokoyama K."/>
            <person name="Han C.-G."/>
            <person name="Ohtsubo E."/>
            <person name="Nakayama K."/>
            <person name="Murata T."/>
            <person name="Tanaka M."/>
            <person name="Tobe T."/>
            <person name="Iida T."/>
            <person name="Takami H."/>
            <person name="Honda T."/>
            <person name="Sasakawa C."/>
            <person name="Ogasawara N."/>
            <person name="Yasunaga T."/>
            <person name="Kuhara S."/>
            <person name="Shiba T."/>
            <person name="Hattori M."/>
            <person name="Shinagawa H."/>
        </authorList>
    </citation>
    <scope>NUCLEOTIDE SEQUENCE [LARGE SCALE GENOMIC DNA]</scope>
    <source>
        <strain>O157:H7 / Sakai / RIMD 0509952 / EHEC</strain>
    </source>
</reference>
<dbReference type="EC" id="3.1.1.-" evidence="2"/>
<dbReference type="EMBL" id="AE005174">
    <property type="protein sequence ID" value="AAG54825.1"/>
    <property type="molecule type" value="Genomic_DNA"/>
</dbReference>
<dbReference type="EMBL" id="BA000007">
    <property type="protein sequence ID" value="BAB33952.1"/>
    <property type="molecule type" value="Genomic_DNA"/>
</dbReference>
<dbReference type="PIR" id="A90695">
    <property type="entry name" value="A90695"/>
</dbReference>
<dbReference type="PIR" id="E85545">
    <property type="entry name" value="E85545"/>
</dbReference>
<dbReference type="RefSeq" id="NP_308556.1">
    <property type="nucleotide sequence ID" value="NC_002695.1"/>
</dbReference>
<dbReference type="RefSeq" id="WP_000801803.1">
    <property type="nucleotide sequence ID" value="NZ_VOAI01000005.1"/>
</dbReference>
<dbReference type="SMR" id="Q8XD38"/>
<dbReference type="STRING" id="155864.Z0593"/>
<dbReference type="ESTHER" id="ecoli-Aes">
    <property type="family name" value="Acetyl_esterase"/>
</dbReference>
<dbReference type="MEROPS" id="S09.A47"/>
<dbReference type="GeneID" id="914633"/>
<dbReference type="KEGG" id="ece:Z0593"/>
<dbReference type="KEGG" id="ecs:ECs_0529"/>
<dbReference type="PATRIC" id="fig|386585.9.peg.636"/>
<dbReference type="eggNOG" id="COG0657">
    <property type="taxonomic scope" value="Bacteria"/>
</dbReference>
<dbReference type="HOGENOM" id="CLU_012494_6_4_6"/>
<dbReference type="OMA" id="LWYPSTM"/>
<dbReference type="Proteomes" id="UP000000558">
    <property type="component" value="Chromosome"/>
</dbReference>
<dbReference type="Proteomes" id="UP000002519">
    <property type="component" value="Chromosome"/>
</dbReference>
<dbReference type="GO" id="GO:0005737">
    <property type="term" value="C:cytoplasm"/>
    <property type="evidence" value="ECO:0007669"/>
    <property type="project" value="UniProtKB-SubCell"/>
</dbReference>
<dbReference type="GO" id="GO:0052689">
    <property type="term" value="F:carboxylic ester hydrolase activity"/>
    <property type="evidence" value="ECO:0007669"/>
    <property type="project" value="UniProtKB-UniRule"/>
</dbReference>
<dbReference type="FunFam" id="3.40.50.1820:FF:000035">
    <property type="entry name" value="Acetyl esterase"/>
    <property type="match status" value="1"/>
</dbReference>
<dbReference type="Gene3D" id="3.40.50.1820">
    <property type="entry name" value="alpha/beta hydrolase"/>
    <property type="match status" value="1"/>
</dbReference>
<dbReference type="HAMAP" id="MF_01958">
    <property type="entry name" value="Acetyl_esterase"/>
    <property type="match status" value="1"/>
</dbReference>
<dbReference type="InterPro" id="IPR013094">
    <property type="entry name" value="AB_hydrolase_3"/>
</dbReference>
<dbReference type="InterPro" id="IPR029058">
    <property type="entry name" value="AB_hydrolase_fold"/>
</dbReference>
<dbReference type="InterPro" id="IPR023508">
    <property type="entry name" value="Acetyl_esterase"/>
</dbReference>
<dbReference type="InterPro" id="IPR050300">
    <property type="entry name" value="GDXG_lipolytic_enzyme"/>
</dbReference>
<dbReference type="InterPro" id="IPR002168">
    <property type="entry name" value="Lipase_GDXG_HIS_AS"/>
</dbReference>
<dbReference type="InterPro" id="IPR033140">
    <property type="entry name" value="Lipase_GDXG_put_SER_AS"/>
</dbReference>
<dbReference type="NCBIfam" id="NF007547">
    <property type="entry name" value="PRK10162.1"/>
    <property type="match status" value="1"/>
</dbReference>
<dbReference type="PANTHER" id="PTHR48081">
    <property type="entry name" value="AB HYDROLASE SUPERFAMILY PROTEIN C4A8.06C"/>
    <property type="match status" value="1"/>
</dbReference>
<dbReference type="PANTHER" id="PTHR48081:SF8">
    <property type="entry name" value="ALPHA_BETA HYDROLASE FOLD-3 DOMAIN-CONTAINING PROTEIN-RELATED"/>
    <property type="match status" value="1"/>
</dbReference>
<dbReference type="Pfam" id="PF07859">
    <property type="entry name" value="Abhydrolase_3"/>
    <property type="match status" value="1"/>
</dbReference>
<dbReference type="SUPFAM" id="SSF53474">
    <property type="entry name" value="alpha/beta-Hydrolases"/>
    <property type="match status" value="1"/>
</dbReference>
<dbReference type="PROSITE" id="PS01173">
    <property type="entry name" value="LIPASE_GDXG_HIS"/>
    <property type="match status" value="1"/>
</dbReference>
<dbReference type="PROSITE" id="PS01174">
    <property type="entry name" value="LIPASE_GDXG_SER"/>
    <property type="match status" value="1"/>
</dbReference>
<organism>
    <name type="scientific">Escherichia coli O157:H7</name>
    <dbReference type="NCBI Taxonomy" id="83334"/>
    <lineage>
        <taxon>Bacteria</taxon>
        <taxon>Pseudomonadati</taxon>
        <taxon>Pseudomonadota</taxon>
        <taxon>Gammaproteobacteria</taxon>
        <taxon>Enterobacterales</taxon>
        <taxon>Enterobacteriaceae</taxon>
        <taxon>Escherichia</taxon>
    </lineage>
</organism>
<evidence type="ECO:0000250" key="1">
    <source>
        <dbReference type="UniProtKB" id="Q5NUF3"/>
    </source>
</evidence>
<evidence type="ECO:0000255" key="2">
    <source>
        <dbReference type="HAMAP-Rule" id="MF_01958"/>
    </source>
</evidence>
<gene>
    <name evidence="2" type="primary">aes</name>
    <name type="ordered locus">Z0593</name>
    <name type="ordered locus">ECs0529</name>
</gene>
<accession>Q8XD38</accession>
<accession>Q7AGY3</accession>
<protein>
    <recommendedName>
        <fullName evidence="2">Acetyl esterase</fullName>
        <ecNumber evidence="2">3.1.1.-</ecNumber>
    </recommendedName>
</protein>
<feature type="chain" id="PRO_0000239706" description="Acetyl esterase">
    <location>
        <begin position="1"/>
        <end position="319"/>
    </location>
</feature>
<feature type="short sequence motif" description="Involved in the stabilization of the negatively charged intermediate by the formation of the oxyanion hole" evidence="1">
    <location>
        <begin position="91"/>
        <end position="93"/>
    </location>
</feature>
<feature type="active site" evidence="2">
    <location>
        <position position="165"/>
    </location>
</feature>
<feature type="active site" evidence="2">
    <location>
        <position position="262"/>
    </location>
</feature>
<feature type="active site" evidence="2">
    <location>
        <position position="292"/>
    </location>
</feature>
<proteinExistence type="inferred from homology"/>
<comment type="function">
    <text evidence="2">Displays esterase activity towards short chain fatty esters (acyl chain length of up to 8 carbons). Able to hydrolyze triacetylglycerol (triacetin) and tributyrylglycerol (tributyrin), but not trioleylglycerol (triolein) or cholesterol oleate. Negatively regulates MalT activity by antagonizing maltotriose binding. Inhibits MelA galactosidase activity.</text>
</comment>
<comment type="subunit">
    <text evidence="2">Homodimer. Interacts with MalT and MelA.</text>
</comment>
<comment type="subcellular location">
    <subcellularLocation>
        <location evidence="2">Cytoplasm</location>
    </subcellularLocation>
</comment>
<comment type="similarity">
    <text evidence="2">Belongs to the 'GDXG' lipolytic enzyme family.</text>
</comment>